<accession>P84062</accession>
<name>TX1A_PHOKE</name>
<feature type="chain" id="PRO_0000087624" description="U5-ctenitoxin-Pk1a">
    <location>
        <begin position="1"/>
        <end position="78"/>
    </location>
</feature>
<feature type="disulfide bond" evidence="4">
    <location>
        <begin position="6"/>
        <end position="23"/>
    </location>
</feature>
<feature type="disulfide bond" evidence="4">
    <location>
        <begin position="13"/>
        <end position="29"/>
    </location>
</feature>
<feature type="disulfide bond" evidence="1">
    <location>
        <begin position="20"/>
        <end position="52"/>
    </location>
</feature>
<feature type="disulfide bond" evidence="4">
    <location>
        <begin position="22"/>
        <end position="40"/>
    </location>
</feature>
<feature type="disulfide bond" evidence="4">
    <location>
        <begin position="31"/>
        <end position="38"/>
    </location>
</feature>
<feature type="disulfide bond" evidence="1">
    <location>
        <begin position="58"/>
        <end position="73"/>
    </location>
</feature>
<feature type="disulfide bond" evidence="1">
    <location>
        <begin position="69"/>
        <end position="77"/>
    </location>
</feature>
<feature type="sequence variant" evidence="3">
    <original>D</original>
    <variation>G</variation>
    <location>
        <position position="15"/>
    </location>
</feature>
<keyword id="KW-0903">Direct protein sequencing</keyword>
<keyword id="KW-1015">Disulfide bond</keyword>
<keyword id="KW-0960">Knottin</keyword>
<keyword id="KW-0528">Neurotoxin</keyword>
<keyword id="KW-0964">Secreted</keyword>
<keyword id="KW-0800">Toxin</keyword>
<comment type="function">
    <text evidence="3">Lethal neurotoxin. Causes spastic paralysis and death in mice in 4-6 minutes after intracerebroventricular injection at dose levels of 1.5 ug per mouse.</text>
</comment>
<comment type="subcellular location">
    <subcellularLocation>
        <location evidence="2">Secreted</location>
    </subcellularLocation>
</comment>
<comment type="tissue specificity">
    <text evidence="2">Expressed by the venom gland.</text>
</comment>
<comment type="domain">
    <text evidence="4">The presence of a 'disulfide through disulfide knot' structurally defines this protein as a knottin.</text>
</comment>
<comment type="mass spectrometry" mass="8769.66" method="MALDI" evidence="2"/>
<comment type="similarity">
    <text evidence="4">Belongs to the neurotoxin 04 (omega-agtx) family. 02 (Tx1) subfamily.</text>
</comment>
<dbReference type="SMR" id="P84062"/>
<dbReference type="ArachnoServer" id="AS000219">
    <property type="toxin name" value="U5-ctenitoxin-Pk1a"/>
</dbReference>
<dbReference type="GO" id="GO:0005576">
    <property type="term" value="C:extracellular region"/>
    <property type="evidence" value="ECO:0007669"/>
    <property type="project" value="UniProtKB-SubCell"/>
</dbReference>
<dbReference type="GO" id="GO:0090729">
    <property type="term" value="F:toxin activity"/>
    <property type="evidence" value="ECO:0007669"/>
    <property type="project" value="UniProtKB-KW"/>
</dbReference>
<dbReference type="InterPro" id="IPR013605">
    <property type="entry name" value="Toxin_34"/>
</dbReference>
<dbReference type="Pfam" id="PF08396">
    <property type="entry name" value="Toxin_34"/>
    <property type="match status" value="1"/>
</dbReference>
<sequence length="78" mass="8745">AELKSCFPVGHECDDDASNCNCCGDDVYCACGWGRWNCKCKVADQSYAYGICKDKVNCPNRHLWPAKECKMPCRRNCG</sequence>
<reference evidence="4" key="1">
    <citation type="journal article" date="2006" name="Comp. Biochem. Physiol.">
        <title>Comparison of the partial proteomes of the venoms of Brazilian spiders of the genus Phoneutria.</title>
        <authorList>
            <person name="Richardson M."/>
            <person name="Pimenta A.M."/>
            <person name="Bemquerer M.P."/>
            <person name="Santoro M.M."/>
            <person name="Beirao P.S."/>
            <person name="Lima M.E."/>
            <person name="Figueiredo S.G."/>
            <person name="Bloch C. Jr."/>
            <person name="Vasconcelos E.A."/>
            <person name="Campos F.A."/>
            <person name="Gomes P.C."/>
            <person name="Cordeiro M.N."/>
        </authorList>
    </citation>
    <scope>PROTEIN SEQUENCE</scope>
    <scope>SUBCELLULAR LOCATION</scope>
    <scope>TISSUE SPECIFICITY</scope>
    <scope>MASS SPECTROMETRY</scope>
    <source>
        <tissue evidence="2">Venom</tissue>
    </source>
</reference>
<reference evidence="4" key="2">
    <citation type="submission" date="2004-06" db="UniProtKB">
        <title>Neurotoxin PKTx1A from venom of spider Phoneutria keyserlingi has strong sequence identity with PNTx1 from Phoneutria nigriventer.</title>
        <authorList>
            <person name="Richardson M."/>
            <person name="Pimenta A.M.C."/>
            <person name="Bemquerer M.P."/>
            <person name="Santoro M.M."/>
            <person name="Figueiredo S.G."/>
            <person name="Cordeiro M.N."/>
        </authorList>
    </citation>
    <scope>PROTEIN SEQUENCE</scope>
    <scope>FUNCTION</scope>
    <scope>VARIANT GLY-15</scope>
    <source>
        <tissue evidence="3">Venom</tissue>
    </source>
</reference>
<proteinExistence type="evidence at protein level"/>
<protein>
    <recommendedName>
        <fullName>U5-ctenitoxin-Pk1a</fullName>
        <shortName>U5-CNTX-Pk1a</shortName>
    </recommendedName>
    <alternativeName>
        <fullName>Neurotoxin PKTx15C1</fullName>
    </alternativeName>
    <alternativeName>
        <fullName>Neurotoxin PKTx1A</fullName>
    </alternativeName>
</protein>
<organism>
    <name type="scientific">Phoneutria keyserlingi</name>
    <name type="common">Brazilian wandering spider</name>
    <name type="synonym">Ctenus keyserlingii</name>
    <dbReference type="NCBI Taxonomy" id="272754"/>
    <lineage>
        <taxon>Eukaryota</taxon>
        <taxon>Metazoa</taxon>
        <taxon>Ecdysozoa</taxon>
        <taxon>Arthropoda</taxon>
        <taxon>Chelicerata</taxon>
        <taxon>Arachnida</taxon>
        <taxon>Araneae</taxon>
        <taxon>Araneomorphae</taxon>
        <taxon>Entelegynae</taxon>
        <taxon>Lycosoidea</taxon>
        <taxon>Ctenidae</taxon>
        <taxon>Phoneutria</taxon>
    </lineage>
</organism>
<evidence type="ECO:0000255" key="1"/>
<evidence type="ECO:0000269" key="2">
    <source>
    </source>
</evidence>
<evidence type="ECO:0000269" key="3">
    <source ref="2"/>
</evidence>
<evidence type="ECO:0000305" key="4"/>